<comment type="similarity">
    <text evidence="1">Belongs to the UPF0325 family.</text>
</comment>
<feature type="chain" id="PRO_0000289319" description="UPF0325 protein YaeH">
    <location>
        <begin position="1"/>
        <end position="128"/>
    </location>
</feature>
<evidence type="ECO:0000255" key="1">
    <source>
        <dbReference type="HAMAP-Rule" id="MF_01519"/>
    </source>
</evidence>
<accession>Q0TLG8</accession>
<organism>
    <name type="scientific">Escherichia coli O6:K15:H31 (strain 536 / UPEC)</name>
    <dbReference type="NCBI Taxonomy" id="362663"/>
    <lineage>
        <taxon>Bacteria</taxon>
        <taxon>Pseudomonadati</taxon>
        <taxon>Pseudomonadota</taxon>
        <taxon>Gammaproteobacteria</taxon>
        <taxon>Enterobacterales</taxon>
        <taxon>Enterobacteriaceae</taxon>
        <taxon>Escherichia</taxon>
    </lineage>
</organism>
<protein>
    <recommendedName>
        <fullName evidence="1">UPF0325 protein YaeH</fullName>
    </recommendedName>
</protein>
<name>YAEH_ECOL5</name>
<reference key="1">
    <citation type="journal article" date="2006" name="Mol. Microbiol.">
        <title>Role of pathogenicity island-associated integrases in the genome plasticity of uropathogenic Escherichia coli strain 536.</title>
        <authorList>
            <person name="Hochhut B."/>
            <person name="Wilde C."/>
            <person name="Balling G."/>
            <person name="Middendorf B."/>
            <person name="Dobrindt U."/>
            <person name="Brzuszkiewicz E."/>
            <person name="Gottschalk G."/>
            <person name="Carniel E."/>
            <person name="Hacker J."/>
        </authorList>
    </citation>
    <scope>NUCLEOTIDE SEQUENCE [LARGE SCALE GENOMIC DNA]</scope>
    <source>
        <strain>536 / UPEC</strain>
    </source>
</reference>
<sequence length="128" mass="15096">MYDNLKSLGITNPEEIDRYSLRQEANNDILKIYFQKDKGEFFAKSVKFKYPRQRKTVVADGVGQGYKEVQEISPNLRYIIDELDQICQRDRSEVDLKRKILDDLRHLESVVTNKISEIEADLEKLTRK</sequence>
<dbReference type="EMBL" id="CP000247">
    <property type="protein sequence ID" value="ABG68213.1"/>
    <property type="molecule type" value="Genomic_DNA"/>
</dbReference>
<dbReference type="RefSeq" id="WP_000272188.1">
    <property type="nucleotide sequence ID" value="NC_008253.1"/>
</dbReference>
<dbReference type="SMR" id="Q0TLG8"/>
<dbReference type="KEGG" id="ecp:ECP_0173"/>
<dbReference type="HOGENOM" id="CLU_136774_0_0_6"/>
<dbReference type="Proteomes" id="UP000009182">
    <property type="component" value="Chromosome"/>
</dbReference>
<dbReference type="HAMAP" id="MF_01519">
    <property type="entry name" value="UPF0325"/>
    <property type="match status" value="1"/>
</dbReference>
<dbReference type="InterPro" id="IPR020911">
    <property type="entry name" value="UPF0325"/>
</dbReference>
<dbReference type="NCBIfam" id="NF010213">
    <property type="entry name" value="PRK13677.1"/>
    <property type="match status" value="1"/>
</dbReference>
<dbReference type="Pfam" id="PF11944">
    <property type="entry name" value="DUF3461"/>
    <property type="match status" value="1"/>
</dbReference>
<gene>
    <name evidence="1" type="primary">yaeH</name>
    <name type="ordered locus">ECP_0173</name>
</gene>
<proteinExistence type="inferred from homology"/>